<comment type="function">
    <text>This protein is transferred from male to female during mating and may affect egglaying and behavior after mating.</text>
</comment>
<comment type="subcellular location">
    <subcellularLocation>
        <location>Secreted</location>
        <location>Extracellular space</location>
    </subcellularLocation>
    <subcellularLocation>
        <location evidence="2">Cytoplasm</location>
    </subcellularLocation>
</comment>
<comment type="tissue specificity">
    <text evidence="2 3">Main cells and secondary cells of the accessory glands of 1 day old virgin males (at protein level) (PubMed:2257979). In 5 day old virgin males, only detected in the secondary cells (at protein level) (PubMed:2257979). Reappears in the main cells after mating (at protein level) (PubMed:2257979). First detected in adult males 3-4 hr after eclosion, levels increase reaching a peak at day 3-5 which is maintained until at least day 10 of adulthood (at protein level) (PubMed:2257979). In unmated male adults, levels are maintained for the first 6 days of adulthood and then gradually decrease for at least the next 8 days (PubMed:2257979). No expression in females (PubMed:3142802).</text>
</comment>
<comment type="induction">
    <text evidence="2">Up-regulated in response to mating.</text>
</comment>
<comment type="sequence caution" evidence="7">
    <conflict type="erroneous initiation">
        <sequence resource="EMBL-CDS" id="ABK57075"/>
    </conflict>
</comment>
<dbReference type="EMBL" id="Y00219">
    <property type="protein sequence ID" value="CAA68367.1"/>
    <property type="molecule type" value="Genomic_DNA"/>
</dbReference>
<dbReference type="EMBL" id="X70888">
    <property type="protein sequence ID" value="CAA50233.1"/>
    <property type="molecule type" value="Genomic_DNA"/>
</dbReference>
<dbReference type="EMBL" id="X70889">
    <property type="protein sequence ID" value="CAA50235.1"/>
    <property type="molecule type" value="Genomic_DNA"/>
</dbReference>
<dbReference type="EMBL" id="X70890">
    <property type="protein sequence ID" value="CAA50237.1"/>
    <property type="molecule type" value="Genomic_DNA"/>
</dbReference>
<dbReference type="EMBL" id="X70891">
    <property type="protein sequence ID" value="CAA50239.1"/>
    <property type="molecule type" value="Genomic_DNA"/>
</dbReference>
<dbReference type="EMBL" id="X70892">
    <property type="protein sequence ID" value="CAA50241.1"/>
    <property type="molecule type" value="Genomic_DNA"/>
</dbReference>
<dbReference type="EMBL" id="X70893">
    <property type="protein sequence ID" value="CAA50243.1"/>
    <property type="molecule type" value="Genomic_DNA"/>
</dbReference>
<dbReference type="EMBL" id="X70894">
    <property type="protein sequence ID" value="CAA50245.1"/>
    <property type="molecule type" value="Genomic_DNA"/>
</dbReference>
<dbReference type="EMBL" id="X70895">
    <property type="protein sequence ID" value="CAA50247.1"/>
    <property type="molecule type" value="Genomic_DNA"/>
</dbReference>
<dbReference type="EMBL" id="X70896">
    <property type="protein sequence ID" value="CAA50249.1"/>
    <property type="molecule type" value="Genomic_DNA"/>
</dbReference>
<dbReference type="EMBL" id="X70897">
    <property type="protein sequence ID" value="CAA50251.1"/>
    <property type="molecule type" value="Genomic_DNA"/>
</dbReference>
<dbReference type="EMBL" id="AJ231350">
    <property type="protein sequence ID" value="CAB37195.1"/>
    <property type="molecule type" value="Genomic_DNA"/>
</dbReference>
<dbReference type="EMBL" id="AJ231351">
    <property type="protein sequence ID" value="CAB37197.1"/>
    <property type="molecule type" value="Genomic_DNA"/>
</dbReference>
<dbReference type="EMBL" id="AJ231352">
    <property type="protein sequence ID" value="CAB37199.1"/>
    <property type="molecule type" value="Genomic_DNA"/>
</dbReference>
<dbReference type="EMBL" id="AJ231353">
    <property type="protein sequence ID" value="CAB37201.1"/>
    <property type="molecule type" value="Genomic_DNA"/>
</dbReference>
<dbReference type="EMBL" id="AJ231354">
    <property type="protein sequence ID" value="CAB37203.1"/>
    <property type="molecule type" value="Genomic_DNA"/>
</dbReference>
<dbReference type="EMBL" id="AJ231355">
    <property type="protein sequence ID" value="CAB37205.1"/>
    <property type="molecule type" value="Genomic_DNA"/>
</dbReference>
<dbReference type="EMBL" id="AJ231356">
    <property type="protein sequence ID" value="CAB37207.1"/>
    <property type="molecule type" value="Genomic_DNA"/>
</dbReference>
<dbReference type="EMBL" id="AJ231357">
    <property type="protein sequence ID" value="CAB37209.1"/>
    <property type="molecule type" value="Genomic_DNA"/>
</dbReference>
<dbReference type="EMBL" id="AJ231358">
    <property type="protein sequence ID" value="CAB37211.1"/>
    <property type="molecule type" value="Genomic_DNA"/>
</dbReference>
<dbReference type="EMBL" id="AJ231359">
    <property type="protein sequence ID" value="CAB37213.1"/>
    <property type="molecule type" value="Genomic_DNA"/>
</dbReference>
<dbReference type="EMBL" id="AJ231360">
    <property type="protein sequence ID" value="CAB37215.1"/>
    <property type="molecule type" value="Genomic_DNA"/>
</dbReference>
<dbReference type="EMBL" id="AJ231361">
    <property type="protein sequence ID" value="CAB37217.1"/>
    <property type="molecule type" value="Genomic_DNA"/>
</dbReference>
<dbReference type="EMBL" id="AJ231362">
    <property type="protein sequence ID" value="CAB37219.1"/>
    <property type="molecule type" value="Genomic_DNA"/>
</dbReference>
<dbReference type="EMBL" id="AJ231363">
    <property type="protein sequence ID" value="CAB37221.1"/>
    <property type="molecule type" value="Genomic_DNA"/>
</dbReference>
<dbReference type="EMBL" id="AJ231364">
    <property type="protein sequence ID" value="CAB37223.1"/>
    <property type="molecule type" value="Genomic_DNA"/>
</dbReference>
<dbReference type="EMBL" id="AJ231365">
    <property type="protein sequence ID" value="CAB37225.1"/>
    <property type="molecule type" value="Genomic_DNA"/>
</dbReference>
<dbReference type="EMBL" id="AJ231366">
    <property type="protein sequence ID" value="CAB37227.1"/>
    <property type="molecule type" value="Genomic_DNA"/>
</dbReference>
<dbReference type="EMBL" id="AJ231367">
    <property type="protein sequence ID" value="CAB37229.1"/>
    <property type="molecule type" value="Genomic_DNA"/>
</dbReference>
<dbReference type="EMBL" id="AJ231368">
    <property type="protein sequence ID" value="CAB37231.1"/>
    <property type="molecule type" value="Genomic_DNA"/>
</dbReference>
<dbReference type="EMBL" id="AJ231369">
    <property type="protein sequence ID" value="CAB37233.1"/>
    <property type="molecule type" value="Genomic_DNA"/>
</dbReference>
<dbReference type="EMBL" id="AJ231370">
    <property type="protein sequence ID" value="CAB37235.1"/>
    <property type="molecule type" value="Genomic_DNA"/>
</dbReference>
<dbReference type="EMBL" id="AJ231371">
    <property type="protein sequence ID" value="CAB37237.1"/>
    <property type="molecule type" value="Genomic_DNA"/>
</dbReference>
<dbReference type="EMBL" id="AJ231372">
    <property type="protein sequence ID" value="CAB37239.1"/>
    <property type="molecule type" value="Genomic_DNA"/>
</dbReference>
<dbReference type="EMBL" id="AJ231373">
    <property type="protein sequence ID" value="CAB37241.1"/>
    <property type="molecule type" value="Genomic_DNA"/>
</dbReference>
<dbReference type="EMBL" id="AJ231374">
    <property type="protein sequence ID" value="CAB37624.1"/>
    <property type="molecule type" value="Genomic_DNA"/>
</dbReference>
<dbReference type="EMBL" id="AJ231375">
    <property type="protein sequence ID" value="CAB37243.1"/>
    <property type="molecule type" value="Genomic_DNA"/>
</dbReference>
<dbReference type="EMBL" id="AJ231376">
    <property type="protein sequence ID" value="CAB37245.1"/>
    <property type="molecule type" value="Genomic_DNA"/>
</dbReference>
<dbReference type="EMBL" id="AJ231377">
    <property type="protein sequence ID" value="CAB37247.1"/>
    <property type="molecule type" value="Genomic_DNA"/>
</dbReference>
<dbReference type="EMBL" id="AJ231378">
    <property type="protein sequence ID" value="CAB37249.1"/>
    <property type="molecule type" value="Genomic_DNA"/>
</dbReference>
<dbReference type="EMBL" id="AJ231379">
    <property type="protein sequence ID" value="CAB37251.1"/>
    <property type="molecule type" value="Genomic_DNA"/>
</dbReference>
<dbReference type="EMBL" id="AJ231380">
    <property type="protein sequence ID" value="CAB37253.1"/>
    <property type="molecule type" value="Genomic_DNA"/>
</dbReference>
<dbReference type="EMBL" id="AJ231381">
    <property type="protein sequence ID" value="CAB37255.1"/>
    <property type="molecule type" value="Genomic_DNA"/>
</dbReference>
<dbReference type="EMBL" id="AJ231382">
    <property type="protein sequence ID" value="CAB37257.1"/>
    <property type="molecule type" value="Genomic_DNA"/>
</dbReference>
<dbReference type="EMBL" id="AJ231383">
    <property type="protein sequence ID" value="CAB37259.1"/>
    <property type="molecule type" value="Genomic_DNA"/>
</dbReference>
<dbReference type="EMBL" id="AJ231384">
    <property type="protein sequence ID" value="CAB37261.1"/>
    <property type="molecule type" value="Genomic_DNA"/>
</dbReference>
<dbReference type="EMBL" id="AJ231385">
    <property type="protein sequence ID" value="CAB37263.1"/>
    <property type="molecule type" value="Genomic_DNA"/>
</dbReference>
<dbReference type="EMBL" id="AJ231386">
    <property type="protein sequence ID" value="CAB37265.1"/>
    <property type="molecule type" value="Genomic_DNA"/>
</dbReference>
<dbReference type="EMBL" id="AJ231387">
    <property type="protein sequence ID" value="CAB37267.1"/>
    <property type="molecule type" value="Genomic_DNA"/>
</dbReference>
<dbReference type="EMBL" id="AJ231388">
    <property type="protein sequence ID" value="CAB37269.1"/>
    <property type="molecule type" value="Genomic_DNA"/>
</dbReference>
<dbReference type="EMBL" id="AJ231389">
    <property type="protein sequence ID" value="CAB37271.1"/>
    <property type="molecule type" value="Genomic_DNA"/>
</dbReference>
<dbReference type="EMBL" id="AJ231390">
    <property type="protein sequence ID" value="CAB37273.1"/>
    <property type="molecule type" value="Genomic_DNA"/>
</dbReference>
<dbReference type="EMBL" id="AJ231391">
    <property type="protein sequence ID" value="CAB37275.1"/>
    <property type="molecule type" value="Genomic_DNA"/>
</dbReference>
<dbReference type="EMBL" id="AJ231392">
    <property type="protein sequence ID" value="CAB37277.1"/>
    <property type="molecule type" value="Genomic_DNA"/>
</dbReference>
<dbReference type="EMBL" id="AJ231393">
    <property type="protein sequence ID" value="CAB37279.1"/>
    <property type="molecule type" value="Genomic_DNA"/>
</dbReference>
<dbReference type="EMBL" id="AJ231394">
    <property type="protein sequence ID" value="CAB37281.1"/>
    <property type="molecule type" value="Genomic_DNA"/>
</dbReference>
<dbReference type="EMBL" id="AJ231395">
    <property type="protein sequence ID" value="CAB37283.1"/>
    <property type="molecule type" value="Genomic_DNA"/>
</dbReference>
<dbReference type="EMBL" id="AJ231396">
    <property type="protein sequence ID" value="CAB37285.1"/>
    <property type="molecule type" value="Genomic_DNA"/>
</dbReference>
<dbReference type="EMBL" id="AJ231397">
    <property type="protein sequence ID" value="CAB37287.1"/>
    <property type="molecule type" value="Genomic_DNA"/>
</dbReference>
<dbReference type="EMBL" id="AJ231398">
    <property type="protein sequence ID" value="CAB37289.1"/>
    <property type="molecule type" value="Genomic_DNA"/>
</dbReference>
<dbReference type="EMBL" id="AJ231399">
    <property type="protein sequence ID" value="CAB37291.1"/>
    <property type="molecule type" value="Genomic_DNA"/>
</dbReference>
<dbReference type="EMBL" id="AJ231400">
    <property type="protein sequence ID" value="CAB37293.1"/>
    <property type="molecule type" value="Genomic_DNA"/>
</dbReference>
<dbReference type="EMBL" id="AJ231401">
    <property type="protein sequence ID" value="CAB37629.1"/>
    <property type="molecule type" value="Genomic_DNA"/>
</dbReference>
<dbReference type="EMBL" id="AF052470">
    <property type="protein sequence ID" value="AAC27996.1"/>
    <property type="molecule type" value="Genomic_DNA"/>
</dbReference>
<dbReference type="EMBL" id="AF052471">
    <property type="protein sequence ID" value="AAC27998.1"/>
    <property type="molecule type" value="Genomic_DNA"/>
</dbReference>
<dbReference type="EMBL" id="AF052472">
    <property type="protein sequence ID" value="AAC28000.1"/>
    <property type="molecule type" value="Genomic_DNA"/>
</dbReference>
<dbReference type="EMBL" id="AF052473">
    <property type="protein sequence ID" value="AAC28002.1"/>
    <property type="molecule type" value="Genomic_DNA"/>
</dbReference>
<dbReference type="EMBL" id="AF052474">
    <property type="protein sequence ID" value="AAC28004.1"/>
    <property type="molecule type" value="Genomic_DNA"/>
</dbReference>
<dbReference type="EMBL" id="AF052475">
    <property type="protein sequence ID" value="AAC28006.1"/>
    <property type="molecule type" value="Genomic_DNA"/>
</dbReference>
<dbReference type="EMBL" id="AF052476">
    <property type="protein sequence ID" value="AAC28008.1"/>
    <property type="molecule type" value="Genomic_DNA"/>
</dbReference>
<dbReference type="EMBL" id="AF052477">
    <property type="protein sequence ID" value="AAC28010.1"/>
    <property type="molecule type" value="Genomic_DNA"/>
</dbReference>
<dbReference type="EMBL" id="AF052478">
    <property type="protein sequence ID" value="AAC28012.1"/>
    <property type="molecule type" value="Genomic_DNA"/>
</dbReference>
<dbReference type="EMBL" id="AF052479">
    <property type="protein sequence ID" value="AAC28014.1"/>
    <property type="molecule type" value="Genomic_DNA"/>
</dbReference>
<dbReference type="EMBL" id="AF052480">
    <property type="protein sequence ID" value="AAC28016.1"/>
    <property type="molecule type" value="Genomic_DNA"/>
</dbReference>
<dbReference type="EMBL" id="AF052481">
    <property type="protein sequence ID" value="AAC28018.1"/>
    <property type="molecule type" value="Genomic_DNA"/>
</dbReference>
<dbReference type="EMBL" id="AF053250">
    <property type="protein sequence ID" value="AAC28791.1"/>
    <property type="molecule type" value="Genomic_DNA"/>
</dbReference>
<dbReference type="EMBL" id="AF053251">
    <property type="protein sequence ID" value="AAC28793.1"/>
    <property type="molecule type" value="Genomic_DNA"/>
</dbReference>
<dbReference type="EMBL" id="AF053252">
    <property type="protein sequence ID" value="AAC28795.1"/>
    <property type="molecule type" value="Genomic_DNA"/>
</dbReference>
<dbReference type="EMBL" id="AF053253">
    <property type="protein sequence ID" value="AAC28797.1"/>
    <property type="molecule type" value="Genomic_DNA"/>
</dbReference>
<dbReference type="EMBL" id="AF053254">
    <property type="protein sequence ID" value="AAC28799.1"/>
    <property type="molecule type" value="Genomic_DNA"/>
</dbReference>
<dbReference type="EMBL" id="AF053255">
    <property type="protein sequence ID" value="AAC28801.1"/>
    <property type="molecule type" value="Genomic_DNA"/>
</dbReference>
<dbReference type="EMBL" id="AF053256">
    <property type="protein sequence ID" value="AAC28803.1"/>
    <property type="molecule type" value="Genomic_DNA"/>
</dbReference>
<dbReference type="EMBL" id="AF053257">
    <property type="protein sequence ID" value="AAC28805.1"/>
    <property type="molecule type" value="Genomic_DNA"/>
</dbReference>
<dbReference type="EMBL" id="AF053258">
    <property type="protein sequence ID" value="AAC28807.1"/>
    <property type="molecule type" value="Genomic_DNA"/>
</dbReference>
<dbReference type="EMBL" id="AF053259">
    <property type="protein sequence ID" value="AAC28809.1"/>
    <property type="molecule type" value="Genomic_DNA"/>
</dbReference>
<dbReference type="EMBL" id="AF053260">
    <property type="protein sequence ID" value="AAC28811.1"/>
    <property type="molecule type" value="Genomic_DNA"/>
</dbReference>
<dbReference type="EMBL" id="AF053261">
    <property type="protein sequence ID" value="AAC28813.1"/>
    <property type="molecule type" value="Genomic_DNA"/>
</dbReference>
<dbReference type="EMBL" id="AF053262">
    <property type="protein sequence ID" value="AAC28815.1"/>
    <property type="molecule type" value="Genomic_DNA"/>
</dbReference>
<dbReference type="EMBL" id="AF053263">
    <property type="protein sequence ID" value="AAC28817.1"/>
    <property type="molecule type" value="Genomic_DNA"/>
</dbReference>
<dbReference type="EMBL" id="AF053264">
    <property type="protein sequence ID" value="AAC28819.1"/>
    <property type="molecule type" value="Genomic_DNA"/>
</dbReference>
<dbReference type="EMBL" id="AF053265">
    <property type="protein sequence ID" value="AAC28821.1"/>
    <property type="molecule type" value="Genomic_DNA"/>
</dbReference>
<dbReference type="EMBL" id="AF053266">
    <property type="protein sequence ID" value="AAC28823.1"/>
    <property type="molecule type" value="Genomic_DNA"/>
</dbReference>
<dbReference type="EMBL" id="AF053267">
    <property type="protein sequence ID" value="AAC28825.1"/>
    <property type="molecule type" value="Genomic_DNA"/>
</dbReference>
<dbReference type="EMBL" id="AF053268">
    <property type="protein sequence ID" value="AAC28827.1"/>
    <property type="molecule type" value="Genomic_DNA"/>
</dbReference>
<dbReference type="EMBL" id="AF053269">
    <property type="protein sequence ID" value="AAC28829.1"/>
    <property type="molecule type" value="Genomic_DNA"/>
</dbReference>
<dbReference type="EMBL" id="AF053270">
    <property type="protein sequence ID" value="AAC28831.1"/>
    <property type="molecule type" value="Genomic_DNA"/>
</dbReference>
<dbReference type="EMBL" id="AF053271">
    <property type="protein sequence ID" value="AAC28833.1"/>
    <property type="molecule type" value="Genomic_DNA"/>
</dbReference>
<dbReference type="EMBL" id="AF053272">
    <property type="protein sequence ID" value="AAC28835.1"/>
    <property type="molecule type" value="Genomic_DNA"/>
</dbReference>
<dbReference type="EMBL" id="AF053273">
    <property type="protein sequence ID" value="AAC28837.1"/>
    <property type="molecule type" value="Genomic_DNA"/>
</dbReference>
<dbReference type="EMBL" id="AF053274">
    <property type="protein sequence ID" value="AAC28839.1"/>
    <property type="molecule type" value="Genomic_DNA"/>
</dbReference>
<dbReference type="EMBL" id="AF053275">
    <property type="protein sequence ID" value="AAC28841.1"/>
    <property type="molecule type" value="Genomic_DNA"/>
</dbReference>
<dbReference type="EMBL" id="AF053276">
    <property type="protein sequence ID" value="AAC28843.1"/>
    <property type="molecule type" value="Genomic_DNA"/>
</dbReference>
<dbReference type="EMBL" id="AE014134">
    <property type="protein sequence ID" value="AAF52297.1"/>
    <property type="molecule type" value="Genomic_DNA"/>
</dbReference>
<dbReference type="EMBL" id="AE014134">
    <property type="protein sequence ID" value="AAN10560.1"/>
    <property type="molecule type" value="Genomic_DNA"/>
</dbReference>
<dbReference type="EMBL" id="BT023248">
    <property type="protein sequence ID" value="AAY55664.1"/>
    <property type="molecule type" value="mRNA"/>
</dbReference>
<dbReference type="EMBL" id="BT029418">
    <property type="protein sequence ID" value="ABK57075.1"/>
    <property type="status" value="ALT_INIT"/>
    <property type="molecule type" value="mRNA"/>
</dbReference>
<dbReference type="PIR" id="S02854">
    <property type="entry name" value="S02854"/>
</dbReference>
<dbReference type="PIR" id="S30412">
    <property type="entry name" value="S30412"/>
</dbReference>
<dbReference type="RefSeq" id="NP_001285646.1">
    <property type="nucleotide sequence ID" value="NM_001298717.1"/>
</dbReference>
<dbReference type="RefSeq" id="NP_476645.1">
    <property type="nucleotide sequence ID" value="NM_057297.3"/>
</dbReference>
<dbReference type="RefSeq" id="NP_599099.1">
    <property type="nucleotide sequence ID" value="NM_134272.1"/>
</dbReference>
<dbReference type="FunCoup" id="P10334">
    <property type="interactions" value="46"/>
</dbReference>
<dbReference type="STRING" id="7227.FBpp0078788"/>
<dbReference type="PaxDb" id="7227-FBpp0078788"/>
<dbReference type="DNASU" id="33816"/>
<dbReference type="EnsemblMetazoa" id="FBtr0079156">
    <property type="protein sequence ID" value="FBpp0078787"/>
    <property type="gene ID" value="FBgn0002856"/>
</dbReference>
<dbReference type="EnsemblMetazoa" id="FBtr0079157">
    <property type="protein sequence ID" value="FBpp0078788"/>
    <property type="gene ID" value="FBgn0002856"/>
</dbReference>
<dbReference type="EnsemblMetazoa" id="FBtr0342618">
    <property type="protein sequence ID" value="FBpp0309554"/>
    <property type="gene ID" value="FBgn0002856"/>
</dbReference>
<dbReference type="GeneID" id="33816"/>
<dbReference type="KEGG" id="dme:Dmel_CG9024"/>
<dbReference type="AGR" id="FB:FBgn0002856"/>
<dbReference type="CTD" id="33816"/>
<dbReference type="FlyBase" id="FBgn0002856">
    <property type="gene designation" value="Acp26Ab"/>
</dbReference>
<dbReference type="VEuPathDB" id="VectorBase:FBgn0002856"/>
<dbReference type="HOGENOM" id="CLU_187897_0_0_1"/>
<dbReference type="InParanoid" id="P10334"/>
<dbReference type="OMA" id="CTICLWR"/>
<dbReference type="OrthoDB" id="7860727at2759"/>
<dbReference type="PhylomeDB" id="P10334"/>
<dbReference type="BioGRID-ORCS" id="33816">
    <property type="hits" value="0 hits in 1 CRISPR screen"/>
</dbReference>
<dbReference type="GenomeRNAi" id="33816"/>
<dbReference type="PRO" id="PR:P10334"/>
<dbReference type="Proteomes" id="UP000000803">
    <property type="component" value="Chromosome 2L"/>
</dbReference>
<dbReference type="Bgee" id="FBgn0002856">
    <property type="expression patterns" value="Expressed in spermatid in male reproductive gland and 27 other cell types or tissues"/>
</dbReference>
<dbReference type="ExpressionAtlas" id="P10334">
    <property type="expression patterns" value="differential"/>
</dbReference>
<dbReference type="GO" id="GO:0005737">
    <property type="term" value="C:cytoplasm"/>
    <property type="evidence" value="ECO:0007669"/>
    <property type="project" value="UniProtKB-SubCell"/>
</dbReference>
<dbReference type="GO" id="GO:0005576">
    <property type="term" value="C:extracellular region"/>
    <property type="evidence" value="ECO:0000255"/>
    <property type="project" value="FlyBase"/>
</dbReference>
<dbReference type="GO" id="GO:0005615">
    <property type="term" value="C:extracellular space"/>
    <property type="evidence" value="ECO:0007005"/>
    <property type="project" value="FlyBase"/>
</dbReference>
<dbReference type="GO" id="GO:0007617">
    <property type="term" value="P:mating behavior"/>
    <property type="evidence" value="ECO:0007669"/>
    <property type="project" value="InterPro"/>
</dbReference>
<dbReference type="GO" id="GO:0019953">
    <property type="term" value="P:sexual reproduction"/>
    <property type="evidence" value="ECO:0000270"/>
    <property type="project" value="FlyBase"/>
</dbReference>
<dbReference type="InterPro" id="IPR008392">
    <property type="entry name" value="Acp26Ab"/>
</dbReference>
<dbReference type="Pfam" id="PF05777">
    <property type="entry name" value="Acp26Ab"/>
    <property type="match status" value="1"/>
</dbReference>
<reference key="1">
    <citation type="journal article" date="1988" name="Genes Dev.">
        <title>Structure and expression of a Drosophila male accessory gland gene whose product resembles a peptide pheromone precursor.</title>
        <authorList>
            <person name="Monsma S.A."/>
            <person name="Wolfner M.F."/>
        </authorList>
    </citation>
    <scope>NUCLEOTIDE SEQUENCE [GENOMIC DNA]</scope>
    <source>
        <strain>Canton-S</strain>
    </source>
</reference>
<reference key="2">
    <citation type="journal article" date="1992" name="Genetics">
        <title>Polymorphism and divergence in the Mst26A male accessory gland gene region in Drosophila.</title>
        <authorList>
            <person name="Aguade M."/>
            <person name="Miyashita N."/>
            <person name="Langley C.H."/>
        </authorList>
    </citation>
    <scope>NUCLEOTIDE SEQUENCE [GENOMIC DNA]</scope>
    <source>
        <strain>NC-001</strain>
        <strain>NC-002</strain>
        <strain>NC-003</strain>
        <strain>NC-004</strain>
        <strain>NC-005</strain>
        <strain>NC-006</strain>
        <strain>NC-007</strain>
        <strain>NC-008</strain>
        <strain>NC-009</strain>
        <strain>NC-010</strain>
    </source>
</reference>
<reference key="3">
    <citation type="journal article" date="1998" name="Genetics">
        <title>Different forces drive the evolution of the Acp26Aa and Acp26Ab accessory gland genes in the Drosophila melanogaster species complex.</title>
        <authorList>
            <person name="Aguade M."/>
        </authorList>
    </citation>
    <scope>NUCLEOTIDE SEQUENCE [GENOMIC DNA]</scope>
    <scope>VARIANTS HIS-64; VAL-80; ILE-89 AND GLU-90</scope>
    <source>
        <strain>La10</strain>
        <strain>La105</strain>
        <strain>La106</strain>
        <strain>La108</strain>
        <strain>La116</strain>
        <strain>La118</strain>
        <strain>La120</strain>
        <strain>La125</strain>
        <strain>La13</strain>
        <strain>La14</strain>
        <strain>La15</strain>
        <strain>La25</strain>
        <strain>La27</strain>
        <strain>La28</strain>
        <strain>La3</strain>
        <strain>La31</strain>
        <strain>La32</strain>
        <strain>La36</strain>
        <strain>La37</strain>
        <strain>La46</strain>
        <strain>La54</strain>
        <strain>La58</strain>
        <strain>La60</strain>
        <strain>La62</strain>
        <strain>Ma11</strain>
        <strain>Ma18</strain>
        <strain>Ma20</strain>
        <strain>Ma21</strain>
        <strain>Ma23</strain>
        <strain>Ma24</strain>
        <strain>Ma3</strain>
        <strain>Ma31</strain>
        <strain>Ma35</strain>
        <strain>Ma37</strain>
        <strain>Ma43</strain>
        <strain>Ma50</strain>
        <strain>Ma53</strain>
        <strain>Ma56</strain>
        <strain>Ma57</strain>
        <strain>Ma6</strain>
        <strain>Ma60</strain>
        <strain>Ma74</strain>
        <strain>Mo13a</strain>
        <strain>Mo29b</strain>
        <strain>Mo34a</strain>
        <strain>Mo36a</strain>
        <strain>Mo37a</strain>
        <strain>Mo40b</strain>
        <strain>Mo47a</strain>
        <strain>Mo52b</strain>
        <strain>Mo79b</strain>
        <strain>Mo80b</strain>
    </source>
</reference>
<reference key="4">
    <citation type="journal article" date="1998" name="Mol. Biol. Evol.">
        <title>Positive selection driving the evolution of a gene of male reproduction, Acp26Aa, of Drosophila: II. Divergence versus polymorphism.</title>
        <authorList>
            <person name="Tsaur S.-C."/>
            <person name="Ting C.-T."/>
            <person name="Wu C.-I."/>
        </authorList>
    </citation>
    <scope>NUCLEOTIDE SEQUENCE [GENOMIC DNA]</scope>
    <scope>VARIANTS HIS-64; ARG-77; VAL-80; ILE-89 AND GLU-90</scope>
    <source>
        <strain>AF1</strain>
        <strain>AF10</strain>
        <strain>AF2</strain>
        <strain>AF3</strain>
        <strain>AF4</strain>
        <strain>AF5</strain>
        <strain>AF6</strain>
        <strain>AF7</strain>
        <strain>AF8</strain>
        <strain>AF9</strain>
        <strain>Au1</strain>
        <strain>Au10</strain>
        <strain>Au2</strain>
        <strain>Au3</strain>
        <strain>Au4</strain>
        <strain>Au5</strain>
        <strain>Au6</strain>
        <strain>Au7</strain>
        <strain>Au8</strain>
        <strain>Au9</strain>
        <strain>NC-001</strain>
        <strain>NC-002</strain>
        <strain>NC-003</strain>
        <strain>NC-004</strain>
        <strain>NC-005</strain>
        <strain>NC-006</strain>
        <strain>NC-007</strain>
        <strain>NC-008</strain>
        <strain>NC-010</strain>
        <strain>NC-098</strain>
        <strain>Ny1</strain>
        <strain>Ny2</strain>
        <strain>Ny3</strain>
        <strain>Ny4</strain>
        <strain>Ny5</strain>
        <strain>Ny6</strain>
        <strain>Ny7</strain>
        <strain>Ny8</strain>
        <strain>TW1</strain>
        <strain>TW10</strain>
        <strain>TW11</strain>
        <strain>TW2</strain>
        <strain>TW3</strain>
        <strain>TW4</strain>
        <strain>TW5</strain>
        <strain>TW6</strain>
        <strain>TW7</strain>
        <strain>TW8</strain>
        <strain>TW9</strain>
    </source>
</reference>
<reference key="5">
    <citation type="journal article" date="2000" name="Science">
        <title>The genome sequence of Drosophila melanogaster.</title>
        <authorList>
            <person name="Adams M.D."/>
            <person name="Celniker S.E."/>
            <person name="Holt R.A."/>
            <person name="Evans C.A."/>
            <person name="Gocayne J.D."/>
            <person name="Amanatides P.G."/>
            <person name="Scherer S.E."/>
            <person name="Li P.W."/>
            <person name="Hoskins R.A."/>
            <person name="Galle R.F."/>
            <person name="George R.A."/>
            <person name="Lewis S.E."/>
            <person name="Richards S."/>
            <person name="Ashburner M."/>
            <person name="Henderson S.N."/>
            <person name="Sutton G.G."/>
            <person name="Wortman J.R."/>
            <person name="Yandell M.D."/>
            <person name="Zhang Q."/>
            <person name="Chen L.X."/>
            <person name="Brandon R.C."/>
            <person name="Rogers Y.-H.C."/>
            <person name="Blazej R.G."/>
            <person name="Champe M."/>
            <person name="Pfeiffer B.D."/>
            <person name="Wan K.H."/>
            <person name="Doyle C."/>
            <person name="Baxter E.G."/>
            <person name="Helt G."/>
            <person name="Nelson C.R."/>
            <person name="Miklos G.L.G."/>
            <person name="Abril J.F."/>
            <person name="Agbayani A."/>
            <person name="An H.-J."/>
            <person name="Andrews-Pfannkoch C."/>
            <person name="Baldwin D."/>
            <person name="Ballew R.M."/>
            <person name="Basu A."/>
            <person name="Baxendale J."/>
            <person name="Bayraktaroglu L."/>
            <person name="Beasley E.M."/>
            <person name="Beeson K.Y."/>
            <person name="Benos P.V."/>
            <person name="Berman B.P."/>
            <person name="Bhandari D."/>
            <person name="Bolshakov S."/>
            <person name="Borkova D."/>
            <person name="Botchan M.R."/>
            <person name="Bouck J."/>
            <person name="Brokstein P."/>
            <person name="Brottier P."/>
            <person name="Burtis K.C."/>
            <person name="Busam D.A."/>
            <person name="Butler H."/>
            <person name="Cadieu E."/>
            <person name="Center A."/>
            <person name="Chandra I."/>
            <person name="Cherry J.M."/>
            <person name="Cawley S."/>
            <person name="Dahlke C."/>
            <person name="Davenport L.B."/>
            <person name="Davies P."/>
            <person name="de Pablos B."/>
            <person name="Delcher A."/>
            <person name="Deng Z."/>
            <person name="Mays A.D."/>
            <person name="Dew I."/>
            <person name="Dietz S.M."/>
            <person name="Dodson K."/>
            <person name="Doup L.E."/>
            <person name="Downes M."/>
            <person name="Dugan-Rocha S."/>
            <person name="Dunkov B.C."/>
            <person name="Dunn P."/>
            <person name="Durbin K.J."/>
            <person name="Evangelista C.C."/>
            <person name="Ferraz C."/>
            <person name="Ferriera S."/>
            <person name="Fleischmann W."/>
            <person name="Fosler C."/>
            <person name="Gabrielian A.E."/>
            <person name="Garg N.S."/>
            <person name="Gelbart W.M."/>
            <person name="Glasser K."/>
            <person name="Glodek A."/>
            <person name="Gong F."/>
            <person name="Gorrell J.H."/>
            <person name="Gu Z."/>
            <person name="Guan P."/>
            <person name="Harris M."/>
            <person name="Harris N.L."/>
            <person name="Harvey D.A."/>
            <person name="Heiman T.J."/>
            <person name="Hernandez J.R."/>
            <person name="Houck J."/>
            <person name="Hostin D."/>
            <person name="Houston K.A."/>
            <person name="Howland T.J."/>
            <person name="Wei M.-H."/>
            <person name="Ibegwam C."/>
            <person name="Jalali M."/>
            <person name="Kalush F."/>
            <person name="Karpen G.H."/>
            <person name="Ke Z."/>
            <person name="Kennison J.A."/>
            <person name="Ketchum K.A."/>
            <person name="Kimmel B.E."/>
            <person name="Kodira C.D."/>
            <person name="Kraft C.L."/>
            <person name="Kravitz S."/>
            <person name="Kulp D."/>
            <person name="Lai Z."/>
            <person name="Lasko P."/>
            <person name="Lei Y."/>
            <person name="Levitsky A.A."/>
            <person name="Li J.H."/>
            <person name="Li Z."/>
            <person name="Liang Y."/>
            <person name="Lin X."/>
            <person name="Liu X."/>
            <person name="Mattei B."/>
            <person name="McIntosh T.C."/>
            <person name="McLeod M.P."/>
            <person name="McPherson D."/>
            <person name="Merkulov G."/>
            <person name="Milshina N.V."/>
            <person name="Mobarry C."/>
            <person name="Morris J."/>
            <person name="Moshrefi A."/>
            <person name="Mount S.M."/>
            <person name="Moy M."/>
            <person name="Murphy B."/>
            <person name="Murphy L."/>
            <person name="Muzny D.M."/>
            <person name="Nelson D.L."/>
            <person name="Nelson D.R."/>
            <person name="Nelson K.A."/>
            <person name="Nixon K."/>
            <person name="Nusskern D.R."/>
            <person name="Pacleb J.M."/>
            <person name="Palazzolo M."/>
            <person name="Pittman G.S."/>
            <person name="Pan S."/>
            <person name="Pollard J."/>
            <person name="Puri V."/>
            <person name="Reese M.G."/>
            <person name="Reinert K."/>
            <person name="Remington K."/>
            <person name="Saunders R.D.C."/>
            <person name="Scheeler F."/>
            <person name="Shen H."/>
            <person name="Shue B.C."/>
            <person name="Siden-Kiamos I."/>
            <person name="Simpson M."/>
            <person name="Skupski M.P."/>
            <person name="Smith T.J."/>
            <person name="Spier E."/>
            <person name="Spradling A.C."/>
            <person name="Stapleton M."/>
            <person name="Strong R."/>
            <person name="Sun E."/>
            <person name="Svirskas R."/>
            <person name="Tector C."/>
            <person name="Turner R."/>
            <person name="Venter E."/>
            <person name="Wang A.H."/>
            <person name="Wang X."/>
            <person name="Wang Z.-Y."/>
            <person name="Wassarman D.A."/>
            <person name="Weinstock G.M."/>
            <person name="Weissenbach J."/>
            <person name="Williams S.M."/>
            <person name="Woodage T."/>
            <person name="Worley K.C."/>
            <person name="Wu D."/>
            <person name="Yang S."/>
            <person name="Yao Q.A."/>
            <person name="Ye J."/>
            <person name="Yeh R.-F."/>
            <person name="Zaveri J.S."/>
            <person name="Zhan M."/>
            <person name="Zhang G."/>
            <person name="Zhao Q."/>
            <person name="Zheng L."/>
            <person name="Zheng X.H."/>
            <person name="Zhong F.N."/>
            <person name="Zhong W."/>
            <person name="Zhou X."/>
            <person name="Zhu S.C."/>
            <person name="Zhu X."/>
            <person name="Smith H.O."/>
            <person name="Gibbs R.A."/>
            <person name="Myers E.W."/>
            <person name="Rubin G.M."/>
            <person name="Venter J.C."/>
        </authorList>
    </citation>
    <scope>NUCLEOTIDE SEQUENCE [LARGE SCALE GENOMIC DNA]</scope>
    <source>
        <strain>Berkeley</strain>
    </source>
</reference>
<reference key="6">
    <citation type="journal article" date="2002" name="Genome Biol.">
        <title>Annotation of the Drosophila melanogaster euchromatic genome: a systematic review.</title>
        <authorList>
            <person name="Misra S."/>
            <person name="Crosby M.A."/>
            <person name="Mungall C.J."/>
            <person name="Matthews B.B."/>
            <person name="Campbell K.S."/>
            <person name="Hradecky P."/>
            <person name="Huang Y."/>
            <person name="Kaminker J.S."/>
            <person name="Millburn G.H."/>
            <person name="Prochnik S.E."/>
            <person name="Smith C.D."/>
            <person name="Tupy J.L."/>
            <person name="Whitfield E.J."/>
            <person name="Bayraktaroglu L."/>
            <person name="Berman B.P."/>
            <person name="Bettencourt B.R."/>
            <person name="Celniker S.E."/>
            <person name="de Grey A.D.N.J."/>
            <person name="Drysdale R.A."/>
            <person name="Harris N.L."/>
            <person name="Richter J."/>
            <person name="Russo S."/>
            <person name="Schroeder A.J."/>
            <person name="Shu S.Q."/>
            <person name="Stapleton M."/>
            <person name="Yamada C."/>
            <person name="Ashburner M."/>
            <person name="Gelbart W.M."/>
            <person name="Rubin G.M."/>
            <person name="Lewis S.E."/>
        </authorList>
    </citation>
    <scope>GENOME REANNOTATION</scope>
    <source>
        <strain>Berkeley</strain>
    </source>
</reference>
<reference key="7">
    <citation type="submission" date="2006-11" db="EMBL/GenBank/DDBJ databases">
        <authorList>
            <person name="Stapleton M."/>
            <person name="Carlson J.W."/>
            <person name="Chavez C."/>
            <person name="Frise E."/>
            <person name="George R.A."/>
            <person name="Kapadia B."/>
            <person name="Pacleb J.M."/>
            <person name="Park S."/>
            <person name="Wan K.H."/>
            <person name="Yu C."/>
            <person name="Celniker S.E."/>
        </authorList>
    </citation>
    <scope>NUCLEOTIDE SEQUENCE [LARGE SCALE MRNA]</scope>
    <source>
        <strain>Berkeley</strain>
    </source>
</reference>
<reference key="8">
    <citation type="journal article" date="1990" name="Dev. Biol.">
        <title>Synthesis of two Drosophila male accessory gland proteins and their fate after transfer to the female during mating.</title>
        <authorList>
            <person name="Monsma S.A."/>
            <person name="Harada H.A."/>
            <person name="Wolfner M.F."/>
        </authorList>
    </citation>
    <scope>SUBCELLULAR LOCATION</scope>
    <scope>TISSUE SPECIFICITY</scope>
    <scope>INDUCTION</scope>
</reference>
<organism>
    <name type="scientific">Drosophila melanogaster</name>
    <name type="common">Fruit fly</name>
    <dbReference type="NCBI Taxonomy" id="7227"/>
    <lineage>
        <taxon>Eukaryota</taxon>
        <taxon>Metazoa</taxon>
        <taxon>Ecdysozoa</taxon>
        <taxon>Arthropoda</taxon>
        <taxon>Hexapoda</taxon>
        <taxon>Insecta</taxon>
        <taxon>Pterygota</taxon>
        <taxon>Neoptera</taxon>
        <taxon>Endopterygota</taxon>
        <taxon>Diptera</taxon>
        <taxon>Brachycera</taxon>
        <taxon>Muscomorpha</taxon>
        <taxon>Ephydroidea</taxon>
        <taxon>Drosophilidae</taxon>
        <taxon>Drosophila</taxon>
        <taxon>Sophophora</taxon>
    </lineage>
</organism>
<accession>P10334</accession>
<accession>A0JQ48</accession>
<accession>A4V091</accession>
<accession>O76300</accession>
<accession>O76302</accession>
<accession>O77456</accession>
<accession>O97184</accession>
<accession>O97185</accession>
<accession>O97456</accession>
<accession>O97460</accession>
<accession>Q4V3V8</accession>
<accession>Q95NY1</accession>
<accession>Q95NY2</accession>
<accession>Q95NY3</accession>
<accession>Q9V432</accession>
<proteinExistence type="evidence at protein level"/>
<keyword id="KW-0085">Behavior</keyword>
<keyword id="KW-0963">Cytoplasm</keyword>
<keyword id="KW-1185">Reference proteome</keyword>
<keyword id="KW-0964">Secreted</keyword>
<keyword id="KW-0732">Signal</keyword>
<name>MS2B_DROME</name>
<gene>
    <name evidence="8" type="primary">Acp26Ab</name>
    <name evidence="6" type="synonym">msp355b</name>
    <name type="synonym">Mst26Ab</name>
    <name evidence="6" type="synonym">mst355b</name>
    <name evidence="8" type="ORF">CG9024</name>
</gene>
<feature type="signal peptide" evidence="1">
    <location>
        <begin position="1"/>
        <end position="21"/>
    </location>
</feature>
<feature type="chain" id="PRO_0000021759" description="Accessory gland-specific peptide 26Ab">
    <location>
        <begin position="22"/>
        <end position="90"/>
    </location>
</feature>
<feature type="sequence variant" description="In strain: AF1, AF2, AF3, AF5, AF6, AF7, AF8, AF9, AF10, Au4, Au7, Au8, La3, La10, La13, La14, La15, La28, La31, La32, La36, La37, La54, La58, La60, La62, La105, La106, La116, La118, La120, La125, Ma3, Ma6, Ma11, Ma18, Ma20, Ma21, Ma23, Ma24, Ma31, Ma35, Ma37, Ma43, Ma50, Ma53, Ma56, Ma57, Ma60, Ma74, Mo29b, Mo40b, Mo52b, NC-003, NC-004, NC-006, NC-008, NC-009, Ny2, Ny3, Ny4, Ny5, TW1, TW2, TW5, TW6, TW7, TW8, TW10 and TW11." evidence="4 5">
    <original>Q</original>
    <variation>H</variation>
    <location>
        <position position="64"/>
    </location>
</feature>
<feature type="sequence variant" description="In strain: TW9." evidence="4">
    <original>P</original>
    <variation>R</variation>
    <location>
        <position position="77"/>
    </location>
</feature>
<feature type="sequence variant" description="In strain: La3, La10, La13, La15, La27, La28, La31, La62, La105, La106, La116, La118, La120, Ma3, Ma6, Ma18, Ma23, Ma31, Ma37, Ma43, Ma56, Ma57, Ma60, Ma74, Mo13a, Mo29b, Mo34a, Mo40b, Mo52b, NC-002, NC-003, NC-004, NC-006, NC-008, Ny2, Ny4, TW2, TW4, TW5, TW8, TW10 and TW11." evidence="4 5">
    <original>I</original>
    <variation>V</variation>
    <location>
        <position position="80"/>
    </location>
</feature>
<feature type="sequence variant" description="In strain: Au4 and Ma60." evidence="4 5">
    <original>M</original>
    <variation>I</variation>
    <location>
        <position position="89"/>
    </location>
</feature>
<feature type="sequence variant" description="In strain: AF1, AF2, AF3, AF5, AF6, AF7, AF8, AF9, AF10, La14, La31, La32, La60, La106, La118, La125, Ma6, Ma21, Ma24, Ma31, Ma37, Ma50, Ma56, Ma57, Ma74, TW1 and TW6." evidence="4 5">
    <original>A</original>
    <variation>E</variation>
    <location>
        <position position="90"/>
    </location>
</feature>
<evidence type="ECO:0000255" key="1"/>
<evidence type="ECO:0000269" key="2">
    <source>
    </source>
</evidence>
<evidence type="ECO:0000269" key="3">
    <source>
    </source>
</evidence>
<evidence type="ECO:0000269" key="4">
    <source>
    </source>
</evidence>
<evidence type="ECO:0000269" key="5">
    <source>
    </source>
</evidence>
<evidence type="ECO:0000303" key="6">
    <source>
    </source>
</evidence>
<evidence type="ECO:0000305" key="7"/>
<evidence type="ECO:0000312" key="8">
    <source>
        <dbReference type="FlyBase" id="FBgn0002856"/>
    </source>
</evidence>
<protein>
    <recommendedName>
        <fullName>Accessory gland-specific peptide 26Ab</fullName>
    </recommendedName>
    <alternativeName>
        <fullName>Male accessory gland secretory protein 355B</fullName>
    </alternativeName>
</protein>
<sequence length="90" mass="10162">MNYFAVICIFSCICLWQFSDAAPFISVQSSSQSRSQKVMNGMLRTLYDYSVQDSVNDATGHLIQTHKADFNSDVMSPDEIESVRQQLNMA</sequence>